<name>NUSB_RHIE6</name>
<organism>
    <name type="scientific">Rhizobium etli (strain CIAT 652)</name>
    <dbReference type="NCBI Taxonomy" id="491916"/>
    <lineage>
        <taxon>Bacteria</taxon>
        <taxon>Pseudomonadati</taxon>
        <taxon>Pseudomonadota</taxon>
        <taxon>Alphaproteobacteria</taxon>
        <taxon>Hyphomicrobiales</taxon>
        <taxon>Rhizobiaceae</taxon>
        <taxon>Rhizobium/Agrobacterium group</taxon>
        <taxon>Rhizobium</taxon>
    </lineage>
</organism>
<feature type="chain" id="PRO_1000092576" description="Transcription antitermination protein NusB">
    <location>
        <begin position="1"/>
        <end position="160"/>
    </location>
</feature>
<gene>
    <name evidence="1" type="primary">nusB</name>
    <name type="ordered locus">RHECIAT_CH0001597</name>
</gene>
<accession>B3PVD4</accession>
<sequence length="160" mass="17639">MSDEKTERPVKTANQRGAARLAAVQALYQMDVGGTGVLEIVAEYEAHRLGQEIDGATYLKADAGWFRSIVSGVVRDQVRLDPLIAAALQDDWALSRLDSTVRAILRAGVFELLDRKDVPVAVIVTEYVEIAQAFFDDDEPKLVNAVLDRIAKQVRSEAKK</sequence>
<evidence type="ECO:0000255" key="1">
    <source>
        <dbReference type="HAMAP-Rule" id="MF_00073"/>
    </source>
</evidence>
<dbReference type="EMBL" id="CP001074">
    <property type="protein sequence ID" value="ACE90575.1"/>
    <property type="molecule type" value="Genomic_DNA"/>
</dbReference>
<dbReference type="SMR" id="B3PVD4"/>
<dbReference type="KEGG" id="rec:RHECIAT_CH0001597"/>
<dbReference type="eggNOG" id="COG0781">
    <property type="taxonomic scope" value="Bacteria"/>
</dbReference>
<dbReference type="HOGENOM" id="CLU_087843_4_0_5"/>
<dbReference type="Proteomes" id="UP000008817">
    <property type="component" value="Chromosome"/>
</dbReference>
<dbReference type="GO" id="GO:0005829">
    <property type="term" value="C:cytosol"/>
    <property type="evidence" value="ECO:0007669"/>
    <property type="project" value="TreeGrafter"/>
</dbReference>
<dbReference type="GO" id="GO:0003723">
    <property type="term" value="F:RNA binding"/>
    <property type="evidence" value="ECO:0007669"/>
    <property type="project" value="UniProtKB-UniRule"/>
</dbReference>
<dbReference type="GO" id="GO:0006353">
    <property type="term" value="P:DNA-templated transcription termination"/>
    <property type="evidence" value="ECO:0007669"/>
    <property type="project" value="UniProtKB-UniRule"/>
</dbReference>
<dbReference type="GO" id="GO:0031564">
    <property type="term" value="P:transcription antitermination"/>
    <property type="evidence" value="ECO:0007669"/>
    <property type="project" value="UniProtKB-KW"/>
</dbReference>
<dbReference type="Gene3D" id="1.10.940.10">
    <property type="entry name" value="NusB-like"/>
    <property type="match status" value="1"/>
</dbReference>
<dbReference type="HAMAP" id="MF_00073">
    <property type="entry name" value="NusB"/>
    <property type="match status" value="1"/>
</dbReference>
<dbReference type="InterPro" id="IPR035926">
    <property type="entry name" value="NusB-like_sf"/>
</dbReference>
<dbReference type="InterPro" id="IPR011605">
    <property type="entry name" value="NusB_fam"/>
</dbReference>
<dbReference type="InterPro" id="IPR006027">
    <property type="entry name" value="NusB_RsmB_TIM44"/>
</dbReference>
<dbReference type="NCBIfam" id="TIGR01951">
    <property type="entry name" value="nusB"/>
    <property type="match status" value="1"/>
</dbReference>
<dbReference type="PANTHER" id="PTHR11078:SF3">
    <property type="entry name" value="ANTITERMINATION NUSB DOMAIN-CONTAINING PROTEIN"/>
    <property type="match status" value="1"/>
</dbReference>
<dbReference type="PANTHER" id="PTHR11078">
    <property type="entry name" value="N UTILIZATION SUBSTANCE PROTEIN B-RELATED"/>
    <property type="match status" value="1"/>
</dbReference>
<dbReference type="Pfam" id="PF01029">
    <property type="entry name" value="NusB"/>
    <property type="match status" value="1"/>
</dbReference>
<dbReference type="SUPFAM" id="SSF48013">
    <property type="entry name" value="NusB-like"/>
    <property type="match status" value="1"/>
</dbReference>
<keyword id="KW-0694">RNA-binding</keyword>
<keyword id="KW-0804">Transcription</keyword>
<keyword id="KW-0889">Transcription antitermination</keyword>
<keyword id="KW-0805">Transcription regulation</keyword>
<comment type="function">
    <text evidence="1">Involved in transcription antitermination. Required for transcription of ribosomal RNA (rRNA) genes. Binds specifically to the boxA antiterminator sequence of the ribosomal RNA (rrn) operons.</text>
</comment>
<comment type="similarity">
    <text evidence="1">Belongs to the NusB family.</text>
</comment>
<proteinExistence type="inferred from homology"/>
<protein>
    <recommendedName>
        <fullName evidence="1">Transcription antitermination protein NusB</fullName>
    </recommendedName>
    <alternativeName>
        <fullName evidence="1">Antitermination factor NusB</fullName>
    </alternativeName>
</protein>
<reference key="1">
    <citation type="journal article" date="2010" name="Appl. Environ. Microbiol.">
        <title>Conserved symbiotic plasmid DNA sequences in the multireplicon pangenomic structure of Rhizobium etli.</title>
        <authorList>
            <person name="Gonzalez V."/>
            <person name="Acosta J.L."/>
            <person name="Santamaria R.I."/>
            <person name="Bustos P."/>
            <person name="Fernandez J.L."/>
            <person name="Hernandez Gonzalez I.L."/>
            <person name="Diaz R."/>
            <person name="Flores M."/>
            <person name="Palacios R."/>
            <person name="Mora J."/>
            <person name="Davila G."/>
        </authorList>
    </citation>
    <scope>NUCLEOTIDE SEQUENCE [LARGE SCALE GENOMIC DNA]</scope>
    <source>
        <strain>CIAT 652</strain>
    </source>
</reference>